<evidence type="ECO:0000250" key="1"/>
<evidence type="ECO:0000256" key="2">
    <source>
        <dbReference type="SAM" id="MobiDB-lite"/>
    </source>
</evidence>
<evidence type="ECO:0000305" key="3"/>
<reference key="1">
    <citation type="submission" date="2004-09" db="EMBL/GenBank/DDBJ databases">
        <authorList>
            <consortium name="NIH - Xenopus Gene Collection (XGC) project"/>
        </authorList>
    </citation>
    <scope>NUCLEOTIDE SEQUENCE [LARGE SCALE MRNA]</scope>
    <source>
        <tissue>Embryo</tissue>
    </source>
</reference>
<feature type="chain" id="PRO_0000281847" description="tRNA wybutosine-synthesizing protein 3 homolog">
    <location>
        <begin position="1"/>
        <end position="251"/>
    </location>
</feature>
<feature type="region of interest" description="Disordered" evidence="2">
    <location>
        <begin position="1"/>
        <end position="23"/>
    </location>
</feature>
<feature type="region of interest" description="Disordered" evidence="2">
    <location>
        <begin position="209"/>
        <end position="251"/>
    </location>
</feature>
<feature type="compositionally biased region" description="Basic residues" evidence="2">
    <location>
        <begin position="217"/>
        <end position="228"/>
    </location>
</feature>
<protein>
    <recommendedName>
        <fullName>tRNA wybutosine-synthesizing protein 3 homolog</fullName>
        <shortName>tRNA-yW-synthesizing protein 3</shortName>
        <ecNumber>2.1.1.282</ecNumber>
    </recommendedName>
    <alternativeName>
        <fullName>tRNA(Phe) 7-((3-amino-3-carboxypropyl)-4-demethylwyosine(37)-N(4))-methyltransferase</fullName>
    </alternativeName>
</protein>
<comment type="function">
    <text evidence="1">Probable S-adenosyl-L-methionine-dependent methyltransferase that acts as a component of the wybutosine biosynthesis pathway. Wybutosine is a hyper modified guanosine with a tricyclic base found at the 3'-position adjacent to the anticodon of eukaryotic phenylalanine tRNA (By similarity).</text>
</comment>
<comment type="catalytic activity">
    <reaction>
        <text>4-demethyl-7-[(3S)-3-amino-3-carboxypropyl]wyosine(37) in tRNA(Phe) + S-adenosyl-L-methionine = 7-[(3S)-3-amino-3-carboxypropyl]wyosine(37) in tRNA(Phe) + S-adenosyl-L-homocysteine + H(+)</text>
        <dbReference type="Rhea" id="RHEA:36635"/>
        <dbReference type="Rhea" id="RHEA-COMP:10378"/>
        <dbReference type="Rhea" id="RHEA-COMP:10379"/>
        <dbReference type="ChEBI" id="CHEBI:15378"/>
        <dbReference type="ChEBI" id="CHEBI:57856"/>
        <dbReference type="ChEBI" id="CHEBI:59789"/>
        <dbReference type="ChEBI" id="CHEBI:73543"/>
        <dbReference type="ChEBI" id="CHEBI:73550"/>
        <dbReference type="EC" id="2.1.1.282"/>
    </reaction>
</comment>
<comment type="pathway">
    <text>tRNA modification; wybutosine-tRNA(Phe) biosynthesis.</text>
</comment>
<comment type="similarity">
    <text evidence="3">Belongs to the TYW3 family.</text>
</comment>
<dbReference type="EC" id="2.1.1.282"/>
<dbReference type="EMBL" id="BC082379">
    <property type="protein sequence ID" value="AAH82379.1"/>
    <property type="molecule type" value="mRNA"/>
</dbReference>
<dbReference type="RefSeq" id="NP_001087853.1">
    <property type="nucleotide sequence ID" value="NM_001094384.1"/>
</dbReference>
<dbReference type="SMR" id="Q641F8"/>
<dbReference type="DNASU" id="447714"/>
<dbReference type="GeneID" id="447714"/>
<dbReference type="KEGG" id="xla:447714"/>
<dbReference type="CTD" id="447714"/>
<dbReference type="OrthoDB" id="263283at2759"/>
<dbReference type="UniPathway" id="UPA00375"/>
<dbReference type="Proteomes" id="UP000186698">
    <property type="component" value="Chromosome 4L"/>
</dbReference>
<dbReference type="Bgee" id="447714">
    <property type="expression patterns" value="Expressed in egg cell and 19 other cell types or tissues"/>
</dbReference>
<dbReference type="GO" id="GO:0008168">
    <property type="term" value="F:methyltransferase activity"/>
    <property type="evidence" value="ECO:0007669"/>
    <property type="project" value="UniProtKB-KW"/>
</dbReference>
<dbReference type="GO" id="GO:0032259">
    <property type="term" value="P:methylation"/>
    <property type="evidence" value="ECO:0007669"/>
    <property type="project" value="UniProtKB-KW"/>
</dbReference>
<dbReference type="GO" id="GO:0008033">
    <property type="term" value="P:tRNA processing"/>
    <property type="evidence" value="ECO:0007669"/>
    <property type="project" value="UniProtKB-KW"/>
</dbReference>
<dbReference type="FunFam" id="3.30.1960.10:FF:000001">
    <property type="entry name" value="tRNA wybutosine-synthesizing protein 3 homolog"/>
    <property type="match status" value="1"/>
</dbReference>
<dbReference type="Gene3D" id="3.30.1960.10">
    <property type="entry name" value="tRNA wybutosine-synthesizing-like"/>
    <property type="match status" value="1"/>
</dbReference>
<dbReference type="InterPro" id="IPR003827">
    <property type="entry name" value="tRNA_yW-synthesising"/>
</dbReference>
<dbReference type="InterPro" id="IPR036602">
    <property type="entry name" value="tRNA_yW-synthesising-like_sf"/>
</dbReference>
<dbReference type="PANTHER" id="PTHR48418">
    <property type="entry name" value="TRNA WYBUTOSINE-SYNTHESIZING PROTEIN 3"/>
    <property type="match status" value="1"/>
</dbReference>
<dbReference type="PANTHER" id="PTHR48418:SF1">
    <property type="entry name" value="TRNA WYBUTOSINE-SYNTHESIZING PROTEIN 3"/>
    <property type="match status" value="1"/>
</dbReference>
<dbReference type="Pfam" id="PF02676">
    <property type="entry name" value="TYW3"/>
    <property type="match status" value="1"/>
</dbReference>
<dbReference type="SUPFAM" id="SSF111278">
    <property type="entry name" value="SSo0622-like"/>
    <property type="match status" value="1"/>
</dbReference>
<keyword id="KW-0489">Methyltransferase</keyword>
<keyword id="KW-1185">Reference proteome</keyword>
<keyword id="KW-0949">S-adenosyl-L-methionine</keyword>
<keyword id="KW-0808">Transferase</keyword>
<keyword id="KW-0819">tRNA processing</keyword>
<name>TYW3_XENLA</name>
<sequence length="251" mass="28693">MEKQEAFSHWKQQSARKTDVSKKGSVDEDIEETVRLINQQERYFTTSSCSGRVIIINETLDNSTIQKQNCSWLFVTHKLCKPDDVFAALQNATGDVVLKFEPFVLHVQCRALEDAQLLHSVAINAGFRNSGITVGKKGKIIMAVRSTHGLEVPLTQNGKCLVSHEYIEFLVHTANKKMEENKRRITRFHSCLHKALQKEDCVHDKTSKEQASSCVYVRRRKRKDRSRKSNCSSSEEEHTDSEPELTLFNDP</sequence>
<accession>Q641F8</accession>
<organism>
    <name type="scientific">Xenopus laevis</name>
    <name type="common">African clawed frog</name>
    <dbReference type="NCBI Taxonomy" id="8355"/>
    <lineage>
        <taxon>Eukaryota</taxon>
        <taxon>Metazoa</taxon>
        <taxon>Chordata</taxon>
        <taxon>Craniata</taxon>
        <taxon>Vertebrata</taxon>
        <taxon>Euteleostomi</taxon>
        <taxon>Amphibia</taxon>
        <taxon>Batrachia</taxon>
        <taxon>Anura</taxon>
        <taxon>Pipoidea</taxon>
        <taxon>Pipidae</taxon>
        <taxon>Xenopodinae</taxon>
        <taxon>Xenopus</taxon>
        <taxon>Xenopus</taxon>
    </lineage>
</organism>
<gene>
    <name type="primary">tyw3</name>
</gene>
<proteinExistence type="evidence at transcript level"/>